<proteinExistence type="inferred from homology"/>
<sequence length="281" mass="30993">MKFVGAHVSAAGGVDQAVIRAHELEATAFALFTKNQRQWRAAPLAEDVIEKFKQACEQYGYTSAQILPHDSYLINLGHPVTEALEKSREAFIDEMLRCQQLGLSLLNFHPGSHLLQIDEGKCLARIAESINIALDATEGVTAVIENTAGQGSNLGFKFEHLAAIIDGVEDKSRVGVCIDTCHAFAAGYDLRTEADCQHTFGALGDIVGFEYLRGMHLNDAKSEFNSRVDRHHSLGEGNIGKTVFSYIMHDPRFDNIPLILETVNPDIWAEEIAWLKSQAEI</sequence>
<dbReference type="EC" id="3.1.21.2" evidence="1"/>
<dbReference type="EMBL" id="AM286415">
    <property type="protein sequence ID" value="CAL11545.1"/>
    <property type="molecule type" value="Genomic_DNA"/>
</dbReference>
<dbReference type="RefSeq" id="WP_005171345.1">
    <property type="nucleotide sequence ID" value="NC_008800.1"/>
</dbReference>
<dbReference type="RefSeq" id="YP_001005763.1">
    <property type="nucleotide sequence ID" value="NC_008800.1"/>
</dbReference>
<dbReference type="SMR" id="A1JLX8"/>
<dbReference type="KEGG" id="yen:YE1455"/>
<dbReference type="PATRIC" id="fig|393305.7.peg.1583"/>
<dbReference type="eggNOG" id="COG0648">
    <property type="taxonomic scope" value="Bacteria"/>
</dbReference>
<dbReference type="HOGENOM" id="CLU_025885_0_4_6"/>
<dbReference type="OrthoDB" id="9805666at2"/>
<dbReference type="Proteomes" id="UP000000642">
    <property type="component" value="Chromosome"/>
</dbReference>
<dbReference type="GO" id="GO:0008833">
    <property type="term" value="F:deoxyribonuclease IV (phage-T4-induced) activity"/>
    <property type="evidence" value="ECO:0007669"/>
    <property type="project" value="UniProtKB-UniRule"/>
</dbReference>
<dbReference type="GO" id="GO:0003677">
    <property type="term" value="F:DNA binding"/>
    <property type="evidence" value="ECO:0007669"/>
    <property type="project" value="InterPro"/>
</dbReference>
<dbReference type="GO" id="GO:0003906">
    <property type="term" value="F:DNA-(apurinic or apyrimidinic site) endonuclease activity"/>
    <property type="evidence" value="ECO:0007669"/>
    <property type="project" value="TreeGrafter"/>
</dbReference>
<dbReference type="GO" id="GO:0008081">
    <property type="term" value="F:phosphoric diester hydrolase activity"/>
    <property type="evidence" value="ECO:0007669"/>
    <property type="project" value="TreeGrafter"/>
</dbReference>
<dbReference type="GO" id="GO:0008270">
    <property type="term" value="F:zinc ion binding"/>
    <property type="evidence" value="ECO:0007669"/>
    <property type="project" value="UniProtKB-UniRule"/>
</dbReference>
<dbReference type="GO" id="GO:0006284">
    <property type="term" value="P:base-excision repair"/>
    <property type="evidence" value="ECO:0007669"/>
    <property type="project" value="TreeGrafter"/>
</dbReference>
<dbReference type="CDD" id="cd00019">
    <property type="entry name" value="AP2Ec"/>
    <property type="match status" value="1"/>
</dbReference>
<dbReference type="FunFam" id="3.20.20.150:FF:000001">
    <property type="entry name" value="Probable endonuclease 4"/>
    <property type="match status" value="1"/>
</dbReference>
<dbReference type="Gene3D" id="3.20.20.150">
    <property type="entry name" value="Divalent-metal-dependent TIM barrel enzymes"/>
    <property type="match status" value="1"/>
</dbReference>
<dbReference type="HAMAP" id="MF_00152">
    <property type="entry name" value="Nfo"/>
    <property type="match status" value="1"/>
</dbReference>
<dbReference type="InterPro" id="IPR001719">
    <property type="entry name" value="AP_endonuc_2"/>
</dbReference>
<dbReference type="InterPro" id="IPR018246">
    <property type="entry name" value="AP_endonuc_F2_Zn_BS"/>
</dbReference>
<dbReference type="InterPro" id="IPR036237">
    <property type="entry name" value="Xyl_isomerase-like_sf"/>
</dbReference>
<dbReference type="InterPro" id="IPR013022">
    <property type="entry name" value="Xyl_isomerase-like_TIM-brl"/>
</dbReference>
<dbReference type="NCBIfam" id="TIGR00587">
    <property type="entry name" value="nfo"/>
    <property type="match status" value="1"/>
</dbReference>
<dbReference type="NCBIfam" id="NF002199">
    <property type="entry name" value="PRK01060.1-4"/>
    <property type="match status" value="1"/>
</dbReference>
<dbReference type="PANTHER" id="PTHR21445:SF0">
    <property type="entry name" value="APURINIC-APYRIMIDINIC ENDONUCLEASE"/>
    <property type="match status" value="1"/>
</dbReference>
<dbReference type="PANTHER" id="PTHR21445">
    <property type="entry name" value="ENDONUCLEASE IV ENDODEOXYRIBONUCLEASE IV"/>
    <property type="match status" value="1"/>
</dbReference>
<dbReference type="Pfam" id="PF01261">
    <property type="entry name" value="AP_endonuc_2"/>
    <property type="match status" value="1"/>
</dbReference>
<dbReference type="SMART" id="SM00518">
    <property type="entry name" value="AP2Ec"/>
    <property type="match status" value="1"/>
</dbReference>
<dbReference type="SUPFAM" id="SSF51658">
    <property type="entry name" value="Xylose isomerase-like"/>
    <property type="match status" value="1"/>
</dbReference>
<dbReference type="PROSITE" id="PS00729">
    <property type="entry name" value="AP_NUCLEASE_F2_1"/>
    <property type="match status" value="1"/>
</dbReference>
<dbReference type="PROSITE" id="PS00730">
    <property type="entry name" value="AP_NUCLEASE_F2_2"/>
    <property type="match status" value="1"/>
</dbReference>
<dbReference type="PROSITE" id="PS00731">
    <property type="entry name" value="AP_NUCLEASE_F2_3"/>
    <property type="match status" value="1"/>
</dbReference>
<dbReference type="PROSITE" id="PS51432">
    <property type="entry name" value="AP_NUCLEASE_F2_4"/>
    <property type="match status" value="1"/>
</dbReference>
<comment type="function">
    <text evidence="1">Endonuclease IV plays a role in DNA repair. It cleaves phosphodiester bonds at apurinic or apyrimidinic (AP) sites, generating a 3'-hydroxyl group and a 5'-terminal sugar phosphate.</text>
</comment>
<comment type="catalytic activity">
    <reaction evidence="1">
        <text>Endonucleolytic cleavage to 5'-phosphooligonucleotide end-products.</text>
        <dbReference type="EC" id="3.1.21.2"/>
    </reaction>
</comment>
<comment type="cofactor">
    <cofactor evidence="1">
        <name>Zn(2+)</name>
        <dbReference type="ChEBI" id="CHEBI:29105"/>
    </cofactor>
    <text evidence="1">Binds 3 Zn(2+) ions.</text>
</comment>
<comment type="similarity">
    <text evidence="1">Belongs to the AP endonuclease 2 family.</text>
</comment>
<accession>A1JLX8</accession>
<feature type="chain" id="PRO_1000011347" description="Probable endonuclease 4">
    <location>
        <begin position="1"/>
        <end position="281"/>
    </location>
</feature>
<feature type="binding site" evidence="1">
    <location>
        <position position="69"/>
    </location>
    <ligand>
        <name>Zn(2+)</name>
        <dbReference type="ChEBI" id="CHEBI:29105"/>
        <label>1</label>
    </ligand>
</feature>
<feature type="binding site" evidence="1">
    <location>
        <position position="109"/>
    </location>
    <ligand>
        <name>Zn(2+)</name>
        <dbReference type="ChEBI" id="CHEBI:29105"/>
        <label>1</label>
    </ligand>
</feature>
<feature type="binding site" evidence="1">
    <location>
        <position position="145"/>
    </location>
    <ligand>
        <name>Zn(2+)</name>
        <dbReference type="ChEBI" id="CHEBI:29105"/>
        <label>1</label>
    </ligand>
</feature>
<feature type="binding site" evidence="1">
    <location>
        <position position="145"/>
    </location>
    <ligand>
        <name>Zn(2+)</name>
        <dbReference type="ChEBI" id="CHEBI:29105"/>
        <label>2</label>
    </ligand>
</feature>
<feature type="binding site" evidence="1">
    <location>
        <position position="179"/>
    </location>
    <ligand>
        <name>Zn(2+)</name>
        <dbReference type="ChEBI" id="CHEBI:29105"/>
        <label>2</label>
    </ligand>
</feature>
<feature type="binding site" evidence="1">
    <location>
        <position position="182"/>
    </location>
    <ligand>
        <name>Zn(2+)</name>
        <dbReference type="ChEBI" id="CHEBI:29105"/>
        <label>3</label>
    </ligand>
</feature>
<feature type="binding site" evidence="1">
    <location>
        <position position="216"/>
    </location>
    <ligand>
        <name>Zn(2+)</name>
        <dbReference type="ChEBI" id="CHEBI:29105"/>
        <label>2</label>
    </ligand>
</feature>
<feature type="binding site" evidence="1">
    <location>
        <position position="229"/>
    </location>
    <ligand>
        <name>Zn(2+)</name>
        <dbReference type="ChEBI" id="CHEBI:29105"/>
        <label>3</label>
    </ligand>
</feature>
<feature type="binding site" evidence="1">
    <location>
        <position position="231"/>
    </location>
    <ligand>
        <name>Zn(2+)</name>
        <dbReference type="ChEBI" id="CHEBI:29105"/>
        <label>3</label>
    </ligand>
</feature>
<feature type="binding site" evidence="1">
    <location>
        <position position="261"/>
    </location>
    <ligand>
        <name>Zn(2+)</name>
        <dbReference type="ChEBI" id="CHEBI:29105"/>
        <label>2</label>
    </ligand>
</feature>
<reference key="1">
    <citation type="journal article" date="2006" name="PLoS Genet.">
        <title>The complete genome sequence and comparative genome analysis of the high pathogenicity Yersinia enterocolitica strain 8081.</title>
        <authorList>
            <person name="Thomson N.R."/>
            <person name="Howard S."/>
            <person name="Wren B.W."/>
            <person name="Holden M.T.G."/>
            <person name="Crossman L."/>
            <person name="Challis G.L."/>
            <person name="Churcher C."/>
            <person name="Mungall K."/>
            <person name="Brooks K."/>
            <person name="Chillingworth T."/>
            <person name="Feltwell T."/>
            <person name="Abdellah Z."/>
            <person name="Hauser H."/>
            <person name="Jagels K."/>
            <person name="Maddison M."/>
            <person name="Moule S."/>
            <person name="Sanders M."/>
            <person name="Whitehead S."/>
            <person name="Quail M.A."/>
            <person name="Dougan G."/>
            <person name="Parkhill J."/>
            <person name="Prentice M.B."/>
        </authorList>
    </citation>
    <scope>NUCLEOTIDE SEQUENCE [LARGE SCALE GENOMIC DNA]</scope>
    <source>
        <strain>NCTC 13174 / 8081</strain>
    </source>
</reference>
<evidence type="ECO:0000255" key="1">
    <source>
        <dbReference type="HAMAP-Rule" id="MF_00152"/>
    </source>
</evidence>
<protein>
    <recommendedName>
        <fullName evidence="1">Probable endonuclease 4</fullName>
        <ecNumber evidence="1">3.1.21.2</ecNumber>
    </recommendedName>
    <alternativeName>
        <fullName evidence="1">Endodeoxyribonuclease IV</fullName>
    </alternativeName>
    <alternativeName>
        <fullName evidence="1">Endonuclease IV</fullName>
    </alternativeName>
</protein>
<keyword id="KW-0227">DNA damage</keyword>
<keyword id="KW-0234">DNA repair</keyword>
<keyword id="KW-0255">Endonuclease</keyword>
<keyword id="KW-0378">Hydrolase</keyword>
<keyword id="KW-0479">Metal-binding</keyword>
<keyword id="KW-0540">Nuclease</keyword>
<keyword id="KW-0862">Zinc</keyword>
<name>END4_YERE8</name>
<gene>
    <name evidence="1" type="primary">nfo</name>
    <name type="ordered locus">YE1455</name>
</gene>
<organism>
    <name type="scientific">Yersinia enterocolitica serotype O:8 / biotype 1B (strain NCTC 13174 / 8081)</name>
    <dbReference type="NCBI Taxonomy" id="393305"/>
    <lineage>
        <taxon>Bacteria</taxon>
        <taxon>Pseudomonadati</taxon>
        <taxon>Pseudomonadota</taxon>
        <taxon>Gammaproteobacteria</taxon>
        <taxon>Enterobacterales</taxon>
        <taxon>Yersiniaceae</taxon>
        <taxon>Yersinia</taxon>
    </lineage>
</organism>